<keyword id="KW-0963">Cytoplasm</keyword>
<keyword id="KW-0216">Detoxification</keyword>
<keyword id="KW-0560">Oxidoreductase</keyword>
<keyword id="KW-0575">Peroxidase</keyword>
<keyword id="KW-1185">Reference proteome</keyword>
<keyword id="KW-0711">Selenium</keyword>
<keyword id="KW-0712">Selenocysteine</keyword>
<comment type="function">
    <text evidence="6 7 8 9 10">Has thioredoxin peroxidase activity (PubMed:19690965). May also have glutathione peroxidase activity, although this activity is controversial (PubMed:29124185). Protects cells against reactive oxygen species, which may include photooxidative stress, hydrogen peroxide and organic hydroperoxides (PubMed:19690965, PubMed:29124185, PubMed:32344528, PubMed:32599138, Ref.1).</text>
</comment>
<comment type="catalytic activity">
    <reaction evidence="7">
        <text>2 glutathione + H2O2 = glutathione disulfide + 2 H2O</text>
        <dbReference type="Rhea" id="RHEA:16833"/>
        <dbReference type="ChEBI" id="CHEBI:15377"/>
        <dbReference type="ChEBI" id="CHEBI:16240"/>
        <dbReference type="ChEBI" id="CHEBI:57925"/>
        <dbReference type="ChEBI" id="CHEBI:58297"/>
        <dbReference type="EC" id="1.11.1.9"/>
    </reaction>
</comment>
<comment type="catalytic activity">
    <reaction evidence="6">
        <text>a hydroperoxide + [thioredoxin]-dithiol = an alcohol + [thioredoxin]-disulfide + H2O</text>
        <dbReference type="Rhea" id="RHEA:62620"/>
        <dbReference type="Rhea" id="RHEA-COMP:10698"/>
        <dbReference type="Rhea" id="RHEA-COMP:10700"/>
        <dbReference type="ChEBI" id="CHEBI:15377"/>
        <dbReference type="ChEBI" id="CHEBI:29950"/>
        <dbReference type="ChEBI" id="CHEBI:30879"/>
        <dbReference type="ChEBI" id="CHEBI:35924"/>
        <dbReference type="ChEBI" id="CHEBI:50058"/>
        <dbReference type="EC" id="1.11.1.24"/>
    </reaction>
</comment>
<comment type="biophysicochemical properties">
    <kinetics>
        <KM evidence="6">54 uM for hydrogen peroxide (with cytosolic thioredoxin) (at 30 degrees Celsius and pH 7.9)</KM>
        <KM evidence="6">732 uM for tert-butyl hydroperoxide (with cytosolic thioredoxin) (at 30 degrees Celsius and pH 7.9)</KM>
        <KM evidence="6">63 uM for cumene hydroperoxide (with cytosolic thioredoxin) (at 30 degrees Celsius and pH 7.9)</KM>
        <text evidence="6">kcat is 7.4 sec(-1) for the reduction of hydrogen peroxide (with cytosolic thioredoxin) (at 30 degrees Celsius and pH 7.9) (PubMed:19690965). kcat is 7.4 sec(-1) for the reduction of tert-butyl hydroperoxide (with cytosolic thioredoxin) (at 30 degrees Celsius and pH 7.9) (PubMed:19690965). kcat is 7.4 sec(-1) for the reduction of cumene hydroperoxide (with cytosolic thioredoxin) (at 30 degrees Celsius and pH 7.9) (PubMed:19690965).</text>
    </kinetics>
</comment>
<comment type="subcellular location">
    <subcellularLocation>
        <location evidence="11">Cytoplasm</location>
    </subcellularLocation>
    <text evidence="11">Localizes to the cytoplasm in nitrogen-replete and nitrogen-deplete conditions.</text>
</comment>
<comment type="induction">
    <text evidence="2 3 4 5 6 8 10 12">Strongly induced by singlet oxygen generated from photooxidative stressors (by high light, rose bengal, neutral red, methylene blue, dinoterb, nitrofen, the antioxidant biosynthesis inhibitors norflurazon and isoxaflutole, or a switch of dark-adapted cultures to light) (PubMed:11485197, PubMed:15597886, PubMed:16160847, PubMed:17997989, PubMed:19690965, PubMed:32344528, Ref.1, Ref.5). Mildly to moderately induced by oxidative stress (by hydrogen peroxide, tert-butyl hydroperoxide, and paraquat) (PubMed:11485197, PubMed:19690965, Ref.1, Ref.5). Not induced by salt stress (by sodium chloride) (Ref.1).</text>
</comment>
<comment type="PTM">
    <text evidence="7">Cys-87 is S-selanylated when selenium levels are high. S-selanylation may increase or be important for glutathione peroxidase activity.</text>
</comment>
<comment type="disruption phenotype">
    <text evidence="8 9">Increases cellular levels of reactive oxygen species (ROS) (PubMed:32344528, PubMed:32599138). Decreases cellular levels of triacylglycerol during oxidative stress (induced by nitrogen deprivation) (PubMed:32599138). During oxidative stress (induced by rose bengal or nitrogen starvation), increases expression of genes involved in energy generation and decreases expression of genes involved in photosynthesis, flagellar processes and iron transport (PubMed:32344528, PubMed:32599138). Sensitive to photooxidative stress (induced by rose bengal) (PubMed:32344528).</text>
</comment>
<comment type="miscellaneous">
    <text evidence="17 19">Two alternative-length transcripts are expressed that differ in their stress-dependent induction (Probable). The longer product may function during photooxidative stress (Probable). It was speculated that the longer product is directed to chloroplasts, but this is not observed during nitrogen replete or deplete conditions (Probable).</text>
</comment>
<comment type="similarity">
    <text evidence="16">Belongs to the glutathione peroxidase family.</text>
</comment>
<comment type="caution">
    <text evidence="6 7">The peroxidase activity using glutathione as a reducing power is controversial (PubMed:19690965, PubMed:29124185). In one study, GPX5 lacks glutathione peroxidase activity (PubMed:19690965). However, in another study, GPX5 shows glutathione peroxidase activity when cells are grown in selenium rich medium (PubMed:29124185).</text>
</comment>
<protein>
    <recommendedName>
        <fullName evidence="1">Glutathione peroxidase-like peroxiredoxin GPX5</fullName>
        <ecNumber evidence="6">1.11.1.24</ecNumber>
    </recommendedName>
    <alternativeName>
        <fullName evidence="15">CrGPX5</fullName>
    </alternativeName>
    <alternativeName>
        <fullName evidence="16">Glutathione peroxidase GPX5</fullName>
        <ecNumber evidence="7">1.11.1.9</ecNumber>
    </alternativeName>
    <alternativeName>
        <fullName evidence="14">Glutathione peroxidase homolog</fullName>
    </alternativeName>
</protein>
<sequence>MANPEFYGLSTTTLSGQPFPFKDLEGKAVLIVNVASKCGFTPQYKGLEELYQQYKDRGLVILGFPCNQFGGQEPGDASAIGEFCQRNFGVTFPIMEKSDVNGNDANPVFKYLKSQKKQFMMEMIKWNFEKFLVDKSGQVVARFSSMATPASLAPEIEKVLNA</sequence>
<dbReference type="EC" id="1.11.1.24" evidence="6"/>
<dbReference type="EC" id="1.11.1.9" evidence="7"/>
<dbReference type="EMBL" id="AF014927">
    <property type="protein sequence ID" value="AAB66330.1"/>
    <property type="molecule type" value="Genomic_DNA"/>
</dbReference>
<dbReference type="EMBL" id="CM008971">
    <property type="protein sequence ID" value="PNW77956.1"/>
    <property type="molecule type" value="Genomic_DNA"/>
</dbReference>
<dbReference type="PIR" id="T09638">
    <property type="entry name" value="T09638"/>
</dbReference>
<dbReference type="RefSeq" id="XP_001698575.1">
    <property type="nucleotide sequence ID" value="XM_001698523.1"/>
</dbReference>
<dbReference type="SMR" id="O22448"/>
<dbReference type="STRING" id="3055.O22448"/>
<dbReference type="PeroxiBase" id="2589">
    <property type="entry name" value="CreGPx01"/>
</dbReference>
<dbReference type="PaxDb" id="3055-EDP08068"/>
<dbReference type="ProMEX" id="O22448"/>
<dbReference type="EnsemblPlants" id="PNW77956">
    <property type="protein sequence ID" value="PNW77956"/>
    <property type="gene ID" value="CHLRE_10g458450v5"/>
</dbReference>
<dbReference type="GeneID" id="5723945"/>
<dbReference type="Gramene" id="PNW77956">
    <property type="protein sequence ID" value="PNW77956"/>
    <property type="gene ID" value="CHLRE_10g458450v5"/>
</dbReference>
<dbReference type="KEGG" id="cre:CHLRE_10g458450v5"/>
<dbReference type="eggNOG" id="KOG1651">
    <property type="taxonomic scope" value="Eukaryota"/>
</dbReference>
<dbReference type="HOGENOM" id="CLU_029507_2_2_1"/>
<dbReference type="InParanoid" id="O22448"/>
<dbReference type="OrthoDB" id="446890at2759"/>
<dbReference type="Proteomes" id="UP000006906">
    <property type="component" value="Chromosome 10"/>
</dbReference>
<dbReference type="GO" id="GO:0005737">
    <property type="term" value="C:cytoplasm"/>
    <property type="evidence" value="ECO:0007669"/>
    <property type="project" value="UniProtKB-SubCell"/>
</dbReference>
<dbReference type="GO" id="GO:0004602">
    <property type="term" value="F:glutathione peroxidase activity"/>
    <property type="evidence" value="ECO:0000314"/>
    <property type="project" value="UniProtKB"/>
</dbReference>
<dbReference type="GO" id="GO:0008430">
    <property type="term" value="F:selenium binding"/>
    <property type="evidence" value="ECO:0000314"/>
    <property type="project" value="UniProtKB"/>
</dbReference>
<dbReference type="GO" id="GO:0008379">
    <property type="term" value="F:thioredoxin peroxidase activity"/>
    <property type="evidence" value="ECO:0000314"/>
    <property type="project" value="UniProtKB"/>
</dbReference>
<dbReference type="GO" id="GO:0098869">
    <property type="term" value="P:cellular oxidant detoxification"/>
    <property type="evidence" value="ECO:0000315"/>
    <property type="project" value="UniProtKB"/>
</dbReference>
<dbReference type="GO" id="GO:0034599">
    <property type="term" value="P:cellular response to oxidative stress"/>
    <property type="evidence" value="ECO:0000318"/>
    <property type="project" value="GO_Central"/>
</dbReference>
<dbReference type="GO" id="GO:0080183">
    <property type="term" value="P:response to photooxidative stress"/>
    <property type="evidence" value="ECO:0000315"/>
    <property type="project" value="UniProtKB"/>
</dbReference>
<dbReference type="CDD" id="cd00340">
    <property type="entry name" value="GSH_Peroxidase"/>
    <property type="match status" value="1"/>
</dbReference>
<dbReference type="FunFam" id="3.40.30.10:FF:000010">
    <property type="entry name" value="Glutathione peroxidase"/>
    <property type="match status" value="1"/>
</dbReference>
<dbReference type="Gene3D" id="3.40.30.10">
    <property type="entry name" value="Glutaredoxin"/>
    <property type="match status" value="1"/>
</dbReference>
<dbReference type="InterPro" id="IPR000889">
    <property type="entry name" value="Glutathione_peroxidase"/>
</dbReference>
<dbReference type="InterPro" id="IPR029759">
    <property type="entry name" value="GPX_AS"/>
</dbReference>
<dbReference type="InterPro" id="IPR029760">
    <property type="entry name" value="GPX_CS"/>
</dbReference>
<dbReference type="InterPro" id="IPR036249">
    <property type="entry name" value="Thioredoxin-like_sf"/>
</dbReference>
<dbReference type="InterPro" id="IPR013766">
    <property type="entry name" value="Thioredoxin_domain"/>
</dbReference>
<dbReference type="PANTHER" id="PTHR11592">
    <property type="entry name" value="GLUTATHIONE PEROXIDASE"/>
    <property type="match status" value="1"/>
</dbReference>
<dbReference type="PANTHER" id="PTHR11592:SF78">
    <property type="entry name" value="GLUTATHIONE PEROXIDASE"/>
    <property type="match status" value="1"/>
</dbReference>
<dbReference type="Pfam" id="PF00255">
    <property type="entry name" value="GSHPx"/>
    <property type="match status" value="1"/>
</dbReference>
<dbReference type="PIRSF" id="PIRSF000303">
    <property type="entry name" value="Glutathion_perox"/>
    <property type="match status" value="1"/>
</dbReference>
<dbReference type="PRINTS" id="PR01011">
    <property type="entry name" value="GLUTPROXDASE"/>
</dbReference>
<dbReference type="SUPFAM" id="SSF52833">
    <property type="entry name" value="Thioredoxin-like"/>
    <property type="match status" value="1"/>
</dbReference>
<dbReference type="PROSITE" id="PS00460">
    <property type="entry name" value="GLUTATHIONE_PEROXID_1"/>
    <property type="match status" value="1"/>
</dbReference>
<dbReference type="PROSITE" id="PS00763">
    <property type="entry name" value="GLUTATHIONE_PEROXID_2"/>
    <property type="match status" value="1"/>
</dbReference>
<dbReference type="PROSITE" id="PS51355">
    <property type="entry name" value="GLUTATHIONE_PEROXID_3"/>
    <property type="match status" value="1"/>
</dbReference>
<reference evidence="20" key="1">
    <citation type="journal article" date="1999" name="Plant Sci.">
        <title>Structure of a glutathione peroxidase homologous gene involved in the oxidative stress response in Chlamydomonas reinhardtii.</title>
        <authorList>
            <person name="Leisinger U."/>
            <person name="Ruefenacht K."/>
            <person name="Zehnder A.J.B."/>
            <person name="Eggen R.I.L."/>
        </authorList>
    </citation>
    <scope>NUCLEOTIDE SEQUENCE [GENOMIC DNA]</scope>
    <scope>FUNCTION</scope>
    <scope>INDUCTION</scope>
</reference>
<reference evidence="22" key="2">
    <citation type="journal article" date="2007" name="Science">
        <title>The Chlamydomonas genome reveals the evolution of key animal and plant functions.</title>
        <authorList>
            <person name="Merchant S.S."/>
            <person name="Prochnik S.E."/>
            <person name="Vallon O."/>
            <person name="Harris E.H."/>
            <person name="Karpowicz S.J."/>
            <person name="Witman G.B."/>
            <person name="Terry A."/>
            <person name="Salamov A."/>
            <person name="Fritz-Laylin L.K."/>
            <person name="Marechal-Drouard L."/>
            <person name="Marshall W.F."/>
            <person name="Qu L.H."/>
            <person name="Nelson D.R."/>
            <person name="Sanderfoot A.A."/>
            <person name="Spalding M.H."/>
            <person name="Kapitonov V.V."/>
            <person name="Ren Q."/>
            <person name="Ferris P."/>
            <person name="Lindquist E."/>
            <person name="Shapiro H."/>
            <person name="Lucas S.M."/>
            <person name="Grimwood J."/>
            <person name="Schmutz J."/>
            <person name="Cardol P."/>
            <person name="Cerutti H."/>
            <person name="Chanfreau G."/>
            <person name="Chen C.L."/>
            <person name="Cognat V."/>
            <person name="Croft M.T."/>
            <person name="Dent R."/>
            <person name="Dutcher S."/>
            <person name="Fernandez E."/>
            <person name="Fukuzawa H."/>
            <person name="Gonzalez-Ballester D."/>
            <person name="Gonzalez-Halphen D."/>
            <person name="Hallmann A."/>
            <person name="Hanikenne M."/>
            <person name="Hippler M."/>
            <person name="Inwood W."/>
            <person name="Jabbari K."/>
            <person name="Kalanon M."/>
            <person name="Kuras R."/>
            <person name="Lefebvre P.A."/>
            <person name="Lemaire S.D."/>
            <person name="Lobanov A.V."/>
            <person name="Lohr M."/>
            <person name="Manuell A."/>
            <person name="Meier I."/>
            <person name="Mets L."/>
            <person name="Mittag M."/>
            <person name="Mittelmeier T."/>
            <person name="Moroney J.V."/>
            <person name="Moseley J."/>
            <person name="Napoli C."/>
            <person name="Nedelcu A.M."/>
            <person name="Niyogi K."/>
            <person name="Novoselov S.V."/>
            <person name="Paulsen I.T."/>
            <person name="Pazour G.J."/>
            <person name="Purton S."/>
            <person name="Ral J.P."/>
            <person name="Riano-Pachon D.M."/>
            <person name="Riekhof W."/>
            <person name="Rymarquis L."/>
            <person name="Schroda M."/>
            <person name="Stern D."/>
            <person name="Umen J."/>
            <person name="Willows R."/>
            <person name="Wilson N."/>
            <person name="Zimmer S.L."/>
            <person name="Allmer J."/>
            <person name="Balk J."/>
            <person name="Bisova K."/>
            <person name="Chen C.J."/>
            <person name="Elias M."/>
            <person name="Gendler K."/>
            <person name="Hauser C."/>
            <person name="Lamb M.R."/>
            <person name="Ledford H."/>
            <person name="Long J.C."/>
            <person name="Minagawa J."/>
            <person name="Page M.D."/>
            <person name="Pan J."/>
            <person name="Pootakham W."/>
            <person name="Roje S."/>
            <person name="Rose A."/>
            <person name="Stahlberg E."/>
            <person name="Terauchi A.M."/>
            <person name="Yang P."/>
            <person name="Ball S."/>
            <person name="Bowler C."/>
            <person name="Dieckmann C.L."/>
            <person name="Gladyshev V.N."/>
            <person name="Green P."/>
            <person name="Jorgensen R."/>
            <person name="Mayfield S."/>
            <person name="Mueller-Roeber B."/>
            <person name="Rajamani S."/>
            <person name="Sayre R.T."/>
            <person name="Brokstein P."/>
            <person name="Dubchak I."/>
            <person name="Goodstein D."/>
            <person name="Hornick L."/>
            <person name="Huang Y.W."/>
            <person name="Jhaveri J."/>
            <person name="Luo Y."/>
            <person name="Martinez D."/>
            <person name="Ngau W.C."/>
            <person name="Otillar B."/>
            <person name="Poliakov A."/>
            <person name="Porter A."/>
            <person name="Szajkowski L."/>
            <person name="Werner G."/>
            <person name="Zhou K."/>
            <person name="Grigoriev I.V."/>
            <person name="Rokhsar D.S."/>
            <person name="Grossman A.R."/>
        </authorList>
    </citation>
    <scope>NUCLEOTIDE SEQUENCE [LARGE SCALE GENOMIC DNA]</scope>
    <source>
        <strain>CC-503</strain>
    </source>
</reference>
<reference evidence="16" key="3">
    <citation type="journal article" date="2001" name="Plant Mol. Biol.">
        <title>The glutathione peroxidase homologous gene from Chlamydomonas reinhardtii is transcriptionally up-regulated by singlet oxygen.</title>
        <authorList>
            <person name="Leisinger U."/>
            <person name="Ruefenacht K."/>
            <person name="Fischer B."/>
            <person name="Pesaro M."/>
            <person name="Spengler A."/>
            <person name="Zehnder A.J."/>
            <person name="Eggen R.I."/>
        </authorList>
    </citation>
    <scope>INDUCTION</scope>
</reference>
<reference evidence="16" key="4">
    <citation type="journal article" date="2004" name="Environ. Sci. Technol.">
        <title>Photosensitizers neutral red (type I) and rose bengal (type II) cause light-dependent toxicity in Chlamydomonas reinhardtii and induce the Gpxh gene via increased singlet oxygen formation.</title>
        <authorList>
            <person name="Fischer B.B."/>
            <person name="Krieger-Liszkay A."/>
            <person name="Eggen R.L."/>
        </authorList>
    </citation>
    <scope>INDUCTION</scope>
</reference>
<reference evidence="16" key="5">
    <citation type="journal article" date="2005" name="Plant Sci.">
        <title>Oxidative stress induced by the photosensitizers neutral red (type I) or rose bengal (type II) in the light causes different molecular responses in Chlamydomonas reinhardtii.</title>
        <authorList>
            <person name="Fischer B.B."/>
            <person name="Krieger-Liszkay A."/>
            <person name="Eggen R.I.L."/>
        </authorList>
    </citation>
    <scope>INDUCTION</scope>
</reference>
<reference evidence="16" key="6">
    <citation type="journal article" date="2006" name="Planta">
        <title>The glutathione peroxidase homologous gene Gpxh in Chlamydomonas reinhardtii is upregulated by singlet oxygen produced in photosystem II.</title>
        <authorList>
            <person name="Fischer B.B."/>
            <person name="Eggen R.I."/>
            <person name="Trebst A."/>
            <person name="Krieger-Liszkay A."/>
        </authorList>
    </citation>
    <scope>INDUCTION</scope>
</reference>
<reference evidence="16" key="7">
    <citation type="journal article" date="2007" name="FEBS Lett.">
        <title>Role of singlet oxygen in chloroplast to nucleus retrograde signaling in Chlamydomonas reinhardtii.</title>
        <authorList>
            <person name="Fischer B.B."/>
            <person name="Krieger-Liszkay A."/>
            <person name="Hideg E."/>
            <person name="Snyrychova I."/>
            <person name="Wiesendanger M."/>
            <person name="Eggen R.I."/>
        </authorList>
    </citation>
    <scope>INDUCTION</scope>
</reference>
<reference evidence="16" key="8">
    <citation type="journal article" date="2009" name="Plant Mol. Biol.">
        <title>Function and regulation of the glutathione peroxidase homologous gene GPXH/GPX5 in Chlamydomonas reinhardtii.</title>
        <authorList>
            <person name="Fischer B.B."/>
            <person name="Dayer R."/>
            <person name="Schwarzenbach Y."/>
            <person name="Lemaire S.D."/>
            <person name="Behra R."/>
            <person name="Liedtke A."/>
            <person name="Eggen R.I."/>
        </authorList>
    </citation>
    <scope>FUNCTION</scope>
    <scope>CATALYTIC ACTIVITY</scope>
    <scope>BIOPHYSICOCHEMICAL PROPERTIES</scope>
    <scope>INDUCTION</scope>
</reference>
<reference evidence="16" key="9">
    <citation type="journal article" date="2015" name="Biochem. Biophys. Rep.">
        <title>Post-translational activation of non-selenium glutathione peroxidase of Chlamydomonas reinhardtii by specific incorporation of selenium.</title>
        <authorList>
            <person name="Takeda T."/>
        </authorList>
    </citation>
    <scope>FUNCTION</scope>
    <scope>CATALYTIC ACTIVITY</scope>
    <scope>S-SELANYLCYSTEINE AT CYS-38</scope>
    <scope>ACTIVE SITE</scope>
    <scope>MUTAGENESIS OF CYS-38; CYS-66 AND CYS-84</scope>
</reference>
<reference evidence="16" key="10">
    <citation type="journal article" date="2019" name="Algal Res.">
        <title>High level of reactive oxygen species inhibits triacylglycerols accumulation in Chlamydomonas reinhardtii.</title>
        <authorList>
            <person name="Miao R."/>
            <person name="Ma X."/>
            <person name="Deng X."/>
            <person name="Huang K."/>
        </authorList>
    </citation>
    <scope>SUBCELLULAR LOCATION</scope>
</reference>
<reference evidence="16" key="11">
    <citation type="journal article" date="2020" name="Genes (Basel)">
        <title>Transcriptomic and Physiological Responses to Oxidative Stress in a Chlamydomonas reinhardtii Glutathione Peroxidase Mutant.</title>
        <authorList>
            <person name="Ma X."/>
            <person name="Zhang B."/>
            <person name="Miao R."/>
            <person name="Deng X."/>
            <person name="Duan Y."/>
            <person name="Cheng Y."/>
            <person name="Zhang W."/>
            <person name="Shi M."/>
            <person name="Huang K."/>
            <person name="Xia X.Q."/>
        </authorList>
    </citation>
    <scope>FUNCTION</scope>
    <scope>INDUCTION</scope>
    <scope>DISRUPTION PHENOTYPE</scope>
</reference>
<reference evidence="16" key="12">
    <citation type="journal article" date="2020" name="Microb. Pathog.">
        <title>Glutathione peroxidase 5 deficiency induces lipid metabolism regulated by reactive oxygen species in Chlamydomonas reinhardtii.</title>
        <authorList>
            <person name="Ma X."/>
            <person name="Wei H."/>
            <person name="Zhang Y."/>
            <person name="Duan Y."/>
            <person name="Zhang W."/>
            <person name="Cheng Y."/>
            <person name="Xia X.Q."/>
            <person name="Shi M."/>
        </authorList>
    </citation>
    <scope>FUNCTION</scope>
    <scope>DISRUPTION PHENOTYPE</scope>
</reference>
<accession>O22448</accession>
<proteinExistence type="evidence at protein level"/>
<organism evidence="20">
    <name type="scientific">Chlamydomonas reinhardtii</name>
    <name type="common">Chlamydomonas smithii</name>
    <dbReference type="NCBI Taxonomy" id="3055"/>
    <lineage>
        <taxon>Eukaryota</taxon>
        <taxon>Viridiplantae</taxon>
        <taxon>Chlorophyta</taxon>
        <taxon>core chlorophytes</taxon>
        <taxon>Chlorophyceae</taxon>
        <taxon>CS clade</taxon>
        <taxon>Chlamydomonadales</taxon>
        <taxon>Chlamydomonadaceae</taxon>
        <taxon>Chlamydomonas</taxon>
    </lineage>
</organism>
<evidence type="ECO:0000250" key="1">
    <source>
        <dbReference type="UniProtKB" id="O59858"/>
    </source>
</evidence>
<evidence type="ECO:0000269" key="2">
    <source>
    </source>
</evidence>
<evidence type="ECO:0000269" key="3">
    <source>
    </source>
</evidence>
<evidence type="ECO:0000269" key="4">
    <source>
    </source>
</evidence>
<evidence type="ECO:0000269" key="5">
    <source>
    </source>
</evidence>
<evidence type="ECO:0000269" key="6">
    <source>
    </source>
</evidence>
<evidence type="ECO:0000269" key="7">
    <source>
    </source>
</evidence>
<evidence type="ECO:0000269" key="8">
    <source>
    </source>
</evidence>
<evidence type="ECO:0000269" key="9">
    <source>
    </source>
</evidence>
<evidence type="ECO:0000269" key="10">
    <source ref="1"/>
</evidence>
<evidence type="ECO:0000269" key="11">
    <source ref="10"/>
</evidence>
<evidence type="ECO:0000269" key="12">
    <source ref="5"/>
</evidence>
<evidence type="ECO:0000303" key="13">
    <source>
    </source>
</evidence>
<evidence type="ECO:0000303" key="14">
    <source ref="1"/>
</evidence>
<evidence type="ECO:0000303" key="15">
    <source ref="10"/>
</evidence>
<evidence type="ECO:0000305" key="16"/>
<evidence type="ECO:0000305" key="17">
    <source>
    </source>
</evidence>
<evidence type="ECO:0000305" key="18">
    <source>
    </source>
</evidence>
<evidence type="ECO:0000305" key="19">
    <source ref="10"/>
</evidence>
<evidence type="ECO:0000312" key="20">
    <source>
        <dbReference type="EMBL" id="AAB66330.1"/>
    </source>
</evidence>
<evidence type="ECO:0000312" key="21">
    <source>
        <dbReference type="EMBL" id="PNW77956.1"/>
    </source>
</evidence>
<evidence type="ECO:0000312" key="22">
    <source>
        <dbReference type="Proteomes" id="UP000006906"/>
    </source>
</evidence>
<feature type="chain" id="PRO_0000457483" description="Glutathione peroxidase-like peroxiredoxin GPX5">
    <location>
        <begin position="1"/>
        <end position="162"/>
    </location>
</feature>
<feature type="active site" evidence="18">
    <location>
        <position position="87"/>
    </location>
</feature>
<feature type="modified residue" description="S-selanylcysteine" evidence="18">
    <location>
        <position position="38"/>
    </location>
</feature>
<feature type="mutagenesis site" description="Abolishes enzyme activity and severely decreases selenium ion binding." evidence="7">
    <original>C</original>
    <variation>S</variation>
    <location>
        <position position="38"/>
    </location>
</feature>
<feature type="mutagenesis site" description="No effect on enzyme activity." evidence="7">
    <original>C</original>
    <variation>S</variation>
    <location>
        <position position="66"/>
    </location>
</feature>
<feature type="mutagenesis site" description="No effect on enzyme activity." evidence="7">
    <original>C</original>
    <variation>S</variation>
    <location>
        <position position="84"/>
    </location>
</feature>
<name>GPX5_CHLRE</name>
<gene>
    <name evidence="13" type="primary">GPX5</name>
    <name evidence="14" type="synonym">GPXH</name>
    <name evidence="21" type="ORF">CHLRE_10g458450v5</name>
</gene>